<organism>
    <name type="scientific">Arthroderma benhamiae (strain ATCC MYA-4681 / CBS 112371)</name>
    <name type="common">Trichophyton mentagrophytes</name>
    <dbReference type="NCBI Taxonomy" id="663331"/>
    <lineage>
        <taxon>Eukaryota</taxon>
        <taxon>Fungi</taxon>
        <taxon>Dikarya</taxon>
        <taxon>Ascomycota</taxon>
        <taxon>Pezizomycotina</taxon>
        <taxon>Eurotiomycetes</taxon>
        <taxon>Eurotiomycetidae</taxon>
        <taxon>Onygenales</taxon>
        <taxon>Arthrodermataceae</taxon>
        <taxon>Trichophyton</taxon>
    </lineage>
</organism>
<protein>
    <recommendedName>
        <fullName evidence="1">Endo-1,3(4)-beta-glucanase ARB_04519</fullName>
        <ecNumber evidence="1">3.2.1.6</ecNumber>
    </recommendedName>
</protein>
<evidence type="ECO:0000250" key="1">
    <source>
        <dbReference type="UniProtKB" id="Q5BAP5"/>
    </source>
</evidence>
<evidence type="ECO:0000255" key="2"/>
<evidence type="ECO:0000255" key="3">
    <source>
        <dbReference type="PROSITE-ProRule" id="PRU00498"/>
    </source>
</evidence>
<evidence type="ECO:0000255" key="4">
    <source>
        <dbReference type="PROSITE-ProRule" id="PRU01098"/>
    </source>
</evidence>
<evidence type="ECO:0000256" key="5">
    <source>
        <dbReference type="SAM" id="MobiDB-lite"/>
    </source>
</evidence>
<evidence type="ECO:0000305" key="6"/>
<evidence type="ECO:0000312" key="7">
    <source>
        <dbReference type="Proteomes" id="UP000008866"/>
    </source>
</evidence>
<accession>D4AJR9</accession>
<name>EGLX_ARTBC</name>
<feature type="signal peptide" evidence="2">
    <location>
        <begin position="1"/>
        <end position="18"/>
    </location>
</feature>
<feature type="chain" id="PRO_0000434494" description="Endo-1,3(4)-beta-glucanase ARB_04519" evidence="2">
    <location>
        <begin position="19"/>
        <end position="457"/>
    </location>
</feature>
<feature type="domain" description="GH16" evidence="4">
    <location>
        <begin position="19"/>
        <end position="319"/>
    </location>
</feature>
<feature type="region of interest" description="Disordered" evidence="5">
    <location>
        <begin position="318"/>
        <end position="397"/>
    </location>
</feature>
<feature type="compositionally biased region" description="Low complexity" evidence="5">
    <location>
        <begin position="333"/>
        <end position="352"/>
    </location>
</feature>
<feature type="compositionally biased region" description="Polar residues" evidence="5">
    <location>
        <begin position="353"/>
        <end position="362"/>
    </location>
</feature>
<feature type="compositionally biased region" description="Low complexity" evidence="5">
    <location>
        <begin position="368"/>
        <end position="378"/>
    </location>
</feature>
<feature type="active site" description="Nucleophile" evidence="4">
    <location>
        <position position="130"/>
    </location>
</feature>
<feature type="active site" description="Proton donor" evidence="4">
    <location>
        <position position="135"/>
    </location>
</feature>
<feature type="glycosylation site" description="N-linked (GlcNAc...) asparagine" evidence="3">
    <location>
        <position position="200"/>
    </location>
</feature>
<sequence>MRTTGLLLLGALAELGSATYILEDDYQPNTWFDQFRFFSAKDPTHAYVNYLDQAEARSQNLIGVRNNAVYLGVDHKNVATGEGRSSVRLETKKVYNHGLIVADINHMPGGECGTWPAFWTTSSAWPMEGELDIIEGVNQQKQNDYALHTAQGCSIPERGDFTGSVVTPNCDVKALGQAENQGCLVEDTKGSRGYGPDFNNATGGVFATEWTDQAISIWFFPREDIPKDVNSEHPDPSKWGKPSAFFGGGECPIGKHVRNQRIIFNTAFCGGWADGMWPGDPICSKKAPTCMEYVRENPSAFEDAYWSINYMKVYQQGTAPTKPSQAPAPPSSTPALPTMKSTSTVSSMVSATQPAPTASNPTGAPMQPSSSSSNNGPQPTGGNGNPGDSCPPPTQPACRTYVTTKTYTLVSTMMPSGPQTTGGIVPVPSAALEDIKDTAQRLRRRDMERHSRRGHHN</sequence>
<gene>
    <name type="ORF">ARB_04519</name>
</gene>
<proteinExistence type="inferred from homology"/>
<dbReference type="EC" id="3.2.1.6" evidence="1"/>
<dbReference type="EMBL" id="ABSU01000001">
    <property type="protein sequence ID" value="EFE36992.1"/>
    <property type="molecule type" value="Genomic_DNA"/>
</dbReference>
<dbReference type="RefSeq" id="XP_003017637.1">
    <property type="nucleotide sequence ID" value="XM_003017591.1"/>
</dbReference>
<dbReference type="SMR" id="D4AJR9"/>
<dbReference type="STRING" id="663331.D4AJR9"/>
<dbReference type="GeneID" id="9522482"/>
<dbReference type="KEGG" id="abe:ARB_04519"/>
<dbReference type="eggNOG" id="ENOG502QUM3">
    <property type="taxonomic scope" value="Eukaryota"/>
</dbReference>
<dbReference type="HOGENOM" id="CLU_016972_4_3_1"/>
<dbReference type="OMA" id="FKNAYWL"/>
<dbReference type="OrthoDB" id="192832at2759"/>
<dbReference type="Proteomes" id="UP000008866">
    <property type="component" value="Unassembled WGS sequence"/>
</dbReference>
<dbReference type="GO" id="GO:0005576">
    <property type="term" value="C:extracellular region"/>
    <property type="evidence" value="ECO:0007669"/>
    <property type="project" value="UniProtKB-SubCell"/>
</dbReference>
<dbReference type="GO" id="GO:0052861">
    <property type="term" value="F:endo-1,3(4)-beta-glucanase activity"/>
    <property type="evidence" value="ECO:0007669"/>
    <property type="project" value="UniProtKB-EC"/>
</dbReference>
<dbReference type="GO" id="GO:0030245">
    <property type="term" value="P:cellulose catabolic process"/>
    <property type="evidence" value="ECO:0007669"/>
    <property type="project" value="UniProtKB-KW"/>
</dbReference>
<dbReference type="CDD" id="cd02181">
    <property type="entry name" value="GH16_fungal_Lam16A_glucanase"/>
    <property type="match status" value="1"/>
</dbReference>
<dbReference type="FunFam" id="2.60.120.200:FF:000114">
    <property type="entry name" value="Probable endo-1,3(4)-beta-glucanase NFIA_089530"/>
    <property type="match status" value="1"/>
</dbReference>
<dbReference type="Gene3D" id="2.60.120.200">
    <property type="match status" value="1"/>
</dbReference>
<dbReference type="InterPro" id="IPR013320">
    <property type="entry name" value="ConA-like_dom_sf"/>
</dbReference>
<dbReference type="InterPro" id="IPR000757">
    <property type="entry name" value="GH16"/>
</dbReference>
<dbReference type="InterPro" id="IPR050546">
    <property type="entry name" value="Glycosyl_Hydrlase_16"/>
</dbReference>
<dbReference type="PANTHER" id="PTHR10963:SF24">
    <property type="entry name" value="GLYCOSIDASE C21B10.07-RELATED"/>
    <property type="match status" value="1"/>
</dbReference>
<dbReference type="PANTHER" id="PTHR10963">
    <property type="entry name" value="GLYCOSYL HYDROLASE-RELATED"/>
    <property type="match status" value="1"/>
</dbReference>
<dbReference type="SUPFAM" id="SSF49899">
    <property type="entry name" value="Concanavalin A-like lectins/glucanases"/>
    <property type="match status" value="1"/>
</dbReference>
<dbReference type="PROSITE" id="PS51762">
    <property type="entry name" value="GH16_2"/>
    <property type="match status" value="1"/>
</dbReference>
<reference key="1">
    <citation type="journal article" date="2011" name="Genome Biol.">
        <title>Comparative and functional genomics provide insights into the pathogenicity of dermatophytic fungi.</title>
        <authorList>
            <person name="Burmester A."/>
            <person name="Shelest E."/>
            <person name="Gloeckner G."/>
            <person name="Heddergott C."/>
            <person name="Schindler S."/>
            <person name="Staib P."/>
            <person name="Heidel A."/>
            <person name="Felder M."/>
            <person name="Petzold A."/>
            <person name="Szafranski K."/>
            <person name="Feuermann M."/>
            <person name="Pedruzzi I."/>
            <person name="Priebe S."/>
            <person name="Groth M."/>
            <person name="Winkler R."/>
            <person name="Li W."/>
            <person name="Kniemeyer O."/>
            <person name="Schroeckh V."/>
            <person name="Hertweck C."/>
            <person name="Hube B."/>
            <person name="White T.C."/>
            <person name="Platzer M."/>
            <person name="Guthke R."/>
            <person name="Heitman J."/>
            <person name="Woestemeyer J."/>
            <person name="Zipfel P.F."/>
            <person name="Monod M."/>
            <person name="Brakhage A.A."/>
        </authorList>
    </citation>
    <scope>NUCLEOTIDE SEQUENCE [LARGE SCALE GENOMIC DNA]</scope>
    <source>
        <strain evidence="7">ATCC MYA-4681 / CBS 112371</strain>
    </source>
</reference>
<keyword id="KW-0119">Carbohydrate metabolism</keyword>
<keyword id="KW-0136">Cellulose degradation</keyword>
<keyword id="KW-0325">Glycoprotein</keyword>
<keyword id="KW-0326">Glycosidase</keyword>
<keyword id="KW-0378">Hydrolase</keyword>
<keyword id="KW-0624">Polysaccharide degradation</keyword>
<keyword id="KW-1185">Reference proteome</keyword>
<keyword id="KW-0964">Secreted</keyword>
<keyword id="KW-0732">Signal</keyword>
<comment type="function">
    <text evidence="1">Mixed-linked glucanase involved in the degradation of complex natural cellulosic substrates. Active on laminarin. lichenan, soluble carboxymethyl cellulose but not on pustulan.</text>
</comment>
<comment type="catalytic activity">
    <reaction evidence="1">
        <text>Endohydrolysis of (1-&gt;3)- or (1-&gt;4)-linkages in beta-D-glucans when the glucose residue whose reducing group is involved in the linkage to be hydrolyzed is itself substituted at C-3.</text>
        <dbReference type="EC" id="3.2.1.6"/>
    </reaction>
</comment>
<comment type="subcellular location">
    <subcellularLocation>
        <location evidence="6">Secreted</location>
    </subcellularLocation>
</comment>
<comment type="similarity">
    <text evidence="4">Belongs to the glycosyl hydrolase 16 family.</text>
</comment>